<accession>Q1ZZU3</accession>
<accession>Q5SYX7</accession>
<accession>Q5SYX8</accession>
<accession>Q8N2W6</accession>
<sequence length="235" mass="26739">MQRRGQRDLWRHNKSCARNRCPRPPRERGGAGFPWVRAQLSVRQFTLRVRVPGPVHLRGRSPTPALDPLAPLNPLIRGPRTPGLRRWIQSLALLLPNCSSSRIPTVPRPHSGLWVQSDFPLGFLSRTEPRLTRSCRGAFRSPRPLPKSGQADGTSEESLHLDIQKLKEKRDMLDKEISQFVSEGYSVDELEDHITQLHEYNDIKDVGQMLMGKLAVIRGVTTKELYPEFGLDMND</sequence>
<comment type="function">
    <text evidence="4">Component of the SWI5-SFR1 complex, a complex required for double-strand break repair via homologous recombination.</text>
</comment>
<comment type="subunit">
    <text evidence="4 5">Component of the SWI5-SFR1 complex. Interacts with RAD51.</text>
</comment>
<comment type="interaction">
    <interactant intactId="EBI-20832852">
        <id>Q1ZZU3</id>
    </interactant>
    <interactant intactId="EBI-1104535">
        <id>Q86XK3</id>
        <label>SFR1</label>
    </interactant>
    <organismsDiffer>false</organismsDiffer>
    <experiments>6</experiments>
</comment>
<comment type="subcellular location">
    <subcellularLocation>
        <location evidence="1">Nucleus</location>
    </subcellularLocation>
</comment>
<comment type="similarity">
    <text evidence="6">Belongs to the SWI5/SAE3 family.</text>
</comment>
<reference key="1">
    <citation type="submission" date="2006-02" db="EMBL/GenBank/DDBJ databases">
        <title>Homo sapiens HBV DNAPTP1-transactivated protein A.</title>
        <authorList>
            <person name="Lun Y.Z."/>
            <person name="Cheng J."/>
            <person name="Guo J."/>
            <person name="Zhang L.Y."/>
            <person name="Zhao B.C."/>
        </authorList>
    </citation>
    <scope>NUCLEOTIDE SEQUENCE [MRNA]</scope>
</reference>
<reference key="2">
    <citation type="journal article" date="2004" name="Nature">
        <title>DNA sequence and analysis of human chromosome 9.</title>
        <authorList>
            <person name="Humphray S.J."/>
            <person name="Oliver K."/>
            <person name="Hunt A.R."/>
            <person name="Plumb R.W."/>
            <person name="Loveland J.E."/>
            <person name="Howe K.L."/>
            <person name="Andrews T.D."/>
            <person name="Searle S."/>
            <person name="Hunt S.E."/>
            <person name="Scott C.E."/>
            <person name="Jones M.C."/>
            <person name="Ainscough R."/>
            <person name="Almeida J.P."/>
            <person name="Ambrose K.D."/>
            <person name="Ashwell R.I.S."/>
            <person name="Babbage A.K."/>
            <person name="Babbage S."/>
            <person name="Bagguley C.L."/>
            <person name="Bailey J."/>
            <person name="Banerjee R."/>
            <person name="Barker D.J."/>
            <person name="Barlow K.F."/>
            <person name="Bates K."/>
            <person name="Beasley H."/>
            <person name="Beasley O."/>
            <person name="Bird C.P."/>
            <person name="Bray-Allen S."/>
            <person name="Brown A.J."/>
            <person name="Brown J.Y."/>
            <person name="Burford D."/>
            <person name="Burrill W."/>
            <person name="Burton J."/>
            <person name="Carder C."/>
            <person name="Carter N.P."/>
            <person name="Chapman J.C."/>
            <person name="Chen Y."/>
            <person name="Clarke G."/>
            <person name="Clark S.Y."/>
            <person name="Clee C.M."/>
            <person name="Clegg S."/>
            <person name="Collier R.E."/>
            <person name="Corby N."/>
            <person name="Crosier M."/>
            <person name="Cummings A.T."/>
            <person name="Davies J."/>
            <person name="Dhami P."/>
            <person name="Dunn M."/>
            <person name="Dutta I."/>
            <person name="Dyer L.W."/>
            <person name="Earthrowl M.E."/>
            <person name="Faulkner L."/>
            <person name="Fleming C.J."/>
            <person name="Frankish A."/>
            <person name="Frankland J.A."/>
            <person name="French L."/>
            <person name="Fricker D.G."/>
            <person name="Garner P."/>
            <person name="Garnett J."/>
            <person name="Ghori J."/>
            <person name="Gilbert J.G.R."/>
            <person name="Glison C."/>
            <person name="Grafham D.V."/>
            <person name="Gribble S."/>
            <person name="Griffiths C."/>
            <person name="Griffiths-Jones S."/>
            <person name="Grocock R."/>
            <person name="Guy J."/>
            <person name="Hall R.E."/>
            <person name="Hammond S."/>
            <person name="Harley J.L."/>
            <person name="Harrison E.S.I."/>
            <person name="Hart E.A."/>
            <person name="Heath P.D."/>
            <person name="Henderson C.D."/>
            <person name="Hopkins B.L."/>
            <person name="Howard P.J."/>
            <person name="Howden P.J."/>
            <person name="Huckle E."/>
            <person name="Johnson C."/>
            <person name="Johnson D."/>
            <person name="Joy A.A."/>
            <person name="Kay M."/>
            <person name="Keenan S."/>
            <person name="Kershaw J.K."/>
            <person name="Kimberley A.M."/>
            <person name="King A."/>
            <person name="Knights A."/>
            <person name="Laird G.K."/>
            <person name="Langford C."/>
            <person name="Lawlor S."/>
            <person name="Leongamornlert D.A."/>
            <person name="Leversha M."/>
            <person name="Lloyd C."/>
            <person name="Lloyd D.M."/>
            <person name="Lovell J."/>
            <person name="Martin S."/>
            <person name="Mashreghi-Mohammadi M."/>
            <person name="Matthews L."/>
            <person name="McLaren S."/>
            <person name="McLay K.E."/>
            <person name="McMurray A."/>
            <person name="Milne S."/>
            <person name="Nickerson T."/>
            <person name="Nisbett J."/>
            <person name="Nordsiek G."/>
            <person name="Pearce A.V."/>
            <person name="Peck A.I."/>
            <person name="Porter K.M."/>
            <person name="Pandian R."/>
            <person name="Pelan S."/>
            <person name="Phillimore B."/>
            <person name="Povey S."/>
            <person name="Ramsey Y."/>
            <person name="Rand V."/>
            <person name="Scharfe M."/>
            <person name="Sehra H.K."/>
            <person name="Shownkeen R."/>
            <person name="Sims S.K."/>
            <person name="Skuce C.D."/>
            <person name="Smith M."/>
            <person name="Steward C.A."/>
            <person name="Swarbreck D."/>
            <person name="Sycamore N."/>
            <person name="Tester J."/>
            <person name="Thorpe A."/>
            <person name="Tracey A."/>
            <person name="Tromans A."/>
            <person name="Thomas D.W."/>
            <person name="Wall M."/>
            <person name="Wallis J.M."/>
            <person name="West A.P."/>
            <person name="Whitehead S.L."/>
            <person name="Willey D.L."/>
            <person name="Williams S.A."/>
            <person name="Wilming L."/>
            <person name="Wray P.W."/>
            <person name="Young L."/>
            <person name="Ashurst J.L."/>
            <person name="Coulson A."/>
            <person name="Blocker H."/>
            <person name="Durbin R.M."/>
            <person name="Sulston J.E."/>
            <person name="Hubbard T."/>
            <person name="Jackson M.J."/>
            <person name="Bentley D.R."/>
            <person name="Beck S."/>
            <person name="Rogers J."/>
            <person name="Dunham I."/>
        </authorList>
    </citation>
    <scope>NUCLEOTIDE SEQUENCE [LARGE SCALE GENOMIC DNA]</scope>
</reference>
<reference key="3">
    <citation type="journal article" date="2004" name="Genome Res.">
        <title>The status, quality, and expansion of the NIH full-length cDNA project: the Mammalian Gene Collection (MGC).</title>
        <authorList>
            <consortium name="The MGC Project Team"/>
        </authorList>
    </citation>
    <scope>NUCLEOTIDE SEQUENCE [LARGE SCALE MRNA] OF 27-235</scope>
    <source>
        <tissue>Brain</tissue>
    </source>
</reference>
<reference key="4">
    <citation type="journal article" date="2011" name="J. Biol. Chem.">
        <title>The role of human SWI5-MEI5 complex in homologous recombination repair.</title>
        <authorList>
            <person name="Yuan J."/>
            <person name="Chen J."/>
        </authorList>
    </citation>
    <scope>FUNCTION</scope>
    <scope>IDENTIFICATION IN THE SWI5-SFR1 COMPLEX</scope>
    <scope>INTERACTION WITH RAD51</scope>
    <scope>MUTAGENESIS OF LEU-173</scope>
</reference>
<reference key="5">
    <citation type="journal article" date="2013" name="Proc. Natl. Acad. Sci. U.S.A.">
        <title>FIGNL1-containing protein complex is required for efficient homologous recombination repair.</title>
        <authorList>
            <person name="Yuan J."/>
            <person name="Chen J."/>
        </authorList>
    </citation>
    <scope>INTERACTION WITH RAD51</scope>
</reference>
<keyword id="KW-0175">Coiled coil</keyword>
<keyword id="KW-0227">DNA damage</keyword>
<keyword id="KW-0234">DNA repair</keyword>
<keyword id="KW-0539">Nucleus</keyword>
<keyword id="KW-1267">Proteomics identification</keyword>
<keyword id="KW-1185">Reference proteome</keyword>
<organism>
    <name type="scientific">Homo sapiens</name>
    <name type="common">Human</name>
    <dbReference type="NCBI Taxonomy" id="9606"/>
    <lineage>
        <taxon>Eukaryota</taxon>
        <taxon>Metazoa</taxon>
        <taxon>Chordata</taxon>
        <taxon>Craniata</taxon>
        <taxon>Vertebrata</taxon>
        <taxon>Euteleostomi</taxon>
        <taxon>Mammalia</taxon>
        <taxon>Eutheria</taxon>
        <taxon>Euarchontoglires</taxon>
        <taxon>Primates</taxon>
        <taxon>Haplorrhini</taxon>
        <taxon>Catarrhini</taxon>
        <taxon>Hominidae</taxon>
        <taxon>Homo</taxon>
    </lineage>
</organism>
<protein>
    <recommendedName>
        <fullName>DNA repair protein SWI5 homolog</fullName>
    </recommendedName>
    <alternativeName>
        <fullName>HBV DNAPTP1-transactivated protein A</fullName>
    </alternativeName>
    <alternativeName>
        <fullName>Protein SAE3 homolog</fullName>
    </alternativeName>
</protein>
<evidence type="ECO:0000250" key="1"/>
<evidence type="ECO:0000255" key="2"/>
<evidence type="ECO:0000256" key="3">
    <source>
        <dbReference type="SAM" id="MobiDB-lite"/>
    </source>
</evidence>
<evidence type="ECO:0000269" key="4">
    <source>
    </source>
</evidence>
<evidence type="ECO:0000269" key="5">
    <source>
    </source>
</evidence>
<evidence type="ECO:0000305" key="6"/>
<feature type="chain" id="PRO_0000324584" description="DNA repair protein SWI5 homolog">
    <location>
        <begin position="1"/>
        <end position="235"/>
    </location>
</feature>
<feature type="region of interest" description="Disordered" evidence="3">
    <location>
        <begin position="139"/>
        <end position="159"/>
    </location>
</feature>
<feature type="coiled-coil region" evidence="2">
    <location>
        <begin position="156"/>
        <end position="183"/>
    </location>
</feature>
<feature type="mutagenesis site" description="Does not affect interaction with SFR1/MEI5." evidence="4">
    <original>L</original>
    <variation>P</variation>
    <location>
        <position position="173"/>
    </location>
</feature>
<gene>
    <name type="primary">SWI5</name>
    <name type="synonym">C9orf119</name>
    <name type="synonym">SAE3</name>
</gene>
<name>SWI5_HUMAN</name>
<proteinExistence type="evidence at protein level"/>
<dbReference type="EMBL" id="DQ414820">
    <property type="protein sequence ID" value="ABD72916.1"/>
    <property type="molecule type" value="mRNA"/>
</dbReference>
<dbReference type="EMBL" id="AL590708">
    <property type="status" value="NOT_ANNOTATED_CDS"/>
    <property type="molecule type" value="Genomic_DNA"/>
</dbReference>
<dbReference type="EMBL" id="BC029911">
    <property type="protein sequence ID" value="AAH29911.1"/>
    <property type="molecule type" value="mRNA"/>
</dbReference>
<dbReference type="RefSeq" id="NP_001035100.1">
    <property type="nucleotide sequence ID" value="NM_001040011.1"/>
</dbReference>
<dbReference type="RefSeq" id="NP_001305018.1">
    <property type="nucleotide sequence ID" value="NM_001318089.1"/>
</dbReference>
<dbReference type="RefSeq" id="NP_001305021.1">
    <property type="nucleotide sequence ID" value="NM_001318092.1"/>
</dbReference>
<dbReference type="SMR" id="Q1ZZU3"/>
<dbReference type="BioGRID" id="131997">
    <property type="interactions" value="3"/>
</dbReference>
<dbReference type="ComplexPortal" id="CPX-8093">
    <property type="entry name" value="SWI5-SFR1 recombination accessory factor complex"/>
</dbReference>
<dbReference type="FunCoup" id="Q1ZZU3">
    <property type="interactions" value="217"/>
</dbReference>
<dbReference type="IntAct" id="Q1ZZU3">
    <property type="interactions" value="3"/>
</dbReference>
<dbReference type="STRING" id="9606.ENSP00000316609"/>
<dbReference type="GlyGen" id="Q1ZZU3">
    <property type="glycosylation" value="1 site"/>
</dbReference>
<dbReference type="iPTMnet" id="Q1ZZU3"/>
<dbReference type="PhosphoSitePlus" id="Q1ZZU3"/>
<dbReference type="BioMuta" id="SWI5"/>
<dbReference type="DMDM" id="121940938"/>
<dbReference type="jPOST" id="Q1ZZU3"/>
<dbReference type="MassIVE" id="Q1ZZU3"/>
<dbReference type="PaxDb" id="9606-ENSP00000316609"/>
<dbReference type="PeptideAtlas" id="Q1ZZU3"/>
<dbReference type="ProteomicsDB" id="61258"/>
<dbReference type="Pumba" id="Q1ZZU3"/>
<dbReference type="DNASU" id="375757"/>
<dbReference type="GeneID" id="375757"/>
<dbReference type="KEGG" id="hsa:375757"/>
<dbReference type="UCSC" id="uc004bup.4">
    <property type="organism name" value="human"/>
</dbReference>
<dbReference type="AGR" id="HGNC:31412"/>
<dbReference type="CTD" id="375757"/>
<dbReference type="DisGeNET" id="375757"/>
<dbReference type="GeneCards" id="SWI5"/>
<dbReference type="HGNC" id="HGNC:31412">
    <property type="gene designation" value="SWI5"/>
</dbReference>
<dbReference type="MIM" id="616528">
    <property type="type" value="gene"/>
</dbReference>
<dbReference type="neXtProt" id="NX_Q1ZZU3"/>
<dbReference type="PharmGKB" id="PA134903574"/>
<dbReference type="eggNOG" id="ENOG502S8Z3">
    <property type="taxonomic scope" value="Eukaryota"/>
</dbReference>
<dbReference type="InParanoid" id="Q1ZZU3"/>
<dbReference type="OrthoDB" id="255837at2759"/>
<dbReference type="PAN-GO" id="Q1ZZU3">
    <property type="GO annotations" value="3 GO annotations based on evolutionary models"/>
</dbReference>
<dbReference type="PhylomeDB" id="Q1ZZU3"/>
<dbReference type="TreeFam" id="TF336078"/>
<dbReference type="PathwayCommons" id="Q1ZZU3"/>
<dbReference type="SignaLink" id="Q1ZZU3"/>
<dbReference type="BioGRID-ORCS" id="375757">
    <property type="hits" value="16 hits in 281 CRISPR screens"/>
</dbReference>
<dbReference type="ChiTaRS" id="SWI5">
    <property type="organism name" value="human"/>
</dbReference>
<dbReference type="GenomeRNAi" id="375757"/>
<dbReference type="Pharos" id="Q1ZZU3">
    <property type="development level" value="Tdark"/>
</dbReference>
<dbReference type="PRO" id="PR:Q1ZZU3"/>
<dbReference type="Proteomes" id="UP000005640">
    <property type="component" value="Chromosome 9"/>
</dbReference>
<dbReference type="RNAct" id="Q1ZZU3">
    <property type="molecule type" value="protein"/>
</dbReference>
<dbReference type="GO" id="GO:0005634">
    <property type="term" value="C:nucleus"/>
    <property type="evidence" value="ECO:0000250"/>
    <property type="project" value="UniProtKB"/>
</dbReference>
<dbReference type="GO" id="GO:0032798">
    <property type="term" value="C:Swi5-Sfr1 complex"/>
    <property type="evidence" value="ECO:0000314"/>
    <property type="project" value="UniProtKB"/>
</dbReference>
<dbReference type="GO" id="GO:0071479">
    <property type="term" value="P:cellular response to ionizing radiation"/>
    <property type="evidence" value="ECO:0000314"/>
    <property type="project" value="UniProtKB"/>
</dbReference>
<dbReference type="GO" id="GO:0000724">
    <property type="term" value="P:double-strand break repair via homologous recombination"/>
    <property type="evidence" value="ECO:0000315"/>
    <property type="project" value="UniProtKB"/>
</dbReference>
<dbReference type="FunFam" id="1.20.5.170:FF:000056">
    <property type="entry name" value="DNA repair protein SWI5 homolog"/>
    <property type="match status" value="1"/>
</dbReference>
<dbReference type="Gene3D" id="1.20.5.170">
    <property type="match status" value="1"/>
</dbReference>
<dbReference type="InterPro" id="IPR010760">
    <property type="entry name" value="DNA-repair_Swi5"/>
</dbReference>
<dbReference type="PANTHER" id="PTHR28529">
    <property type="entry name" value="DNA REPAIR PROTEIN SWI5 HOMOLOG"/>
    <property type="match status" value="1"/>
</dbReference>
<dbReference type="PANTHER" id="PTHR28529:SF2">
    <property type="entry name" value="DNA REPAIR PROTEIN SWI5 HOMOLOG"/>
    <property type="match status" value="1"/>
</dbReference>
<dbReference type="Pfam" id="PF07061">
    <property type="entry name" value="Swi5"/>
    <property type="match status" value="1"/>
</dbReference>